<comment type="function">
    <text evidence="1">Part of the twin-arginine translocation (Tat) system that transports large folded proteins containing a characteristic twin-arginine motif in their signal peptide across membranes. TatA could form the protein-conducting channel of the Tat system.</text>
</comment>
<comment type="subunit">
    <text evidence="1">The Tat system comprises two distinct complexes: a TatABC complex, containing multiple copies of TatA, TatB and TatC subunits, and a separate TatA complex, containing only TatA subunits. Substrates initially bind to the TatABC complex, which probably triggers association of the separate TatA complex to form the active translocon.</text>
</comment>
<comment type="subcellular location">
    <subcellularLocation>
        <location evidence="1">Cell inner membrane</location>
        <topology evidence="1">Single-pass membrane protein</topology>
    </subcellularLocation>
</comment>
<comment type="similarity">
    <text evidence="1">Belongs to the TatA/E family.</text>
</comment>
<proteinExistence type="inferred from homology"/>
<accession>B8DNP8</accession>
<name>TATA_NITV9</name>
<protein>
    <recommendedName>
        <fullName evidence="1">Sec-independent protein translocase protein TatA</fullName>
    </recommendedName>
</protein>
<evidence type="ECO:0000255" key="1">
    <source>
        <dbReference type="HAMAP-Rule" id="MF_00236"/>
    </source>
</evidence>
<evidence type="ECO:0000256" key="2">
    <source>
        <dbReference type="SAM" id="MobiDB-lite"/>
    </source>
</evidence>
<gene>
    <name evidence="1" type="primary">tatA</name>
    <name type="ordered locus">DvMF_0144</name>
</gene>
<dbReference type="EMBL" id="CP001197">
    <property type="protein sequence ID" value="ACL07105.1"/>
    <property type="molecule type" value="Genomic_DNA"/>
</dbReference>
<dbReference type="SMR" id="B8DNP8"/>
<dbReference type="STRING" id="883.DvMF_0144"/>
<dbReference type="KEGG" id="dvm:DvMF_0144"/>
<dbReference type="eggNOG" id="COG1826">
    <property type="taxonomic scope" value="Bacteria"/>
</dbReference>
<dbReference type="HOGENOM" id="CLU_086034_6_0_7"/>
<dbReference type="OrthoDB" id="9813726at2"/>
<dbReference type="GO" id="GO:0033281">
    <property type="term" value="C:TAT protein transport complex"/>
    <property type="evidence" value="ECO:0007669"/>
    <property type="project" value="UniProtKB-UniRule"/>
</dbReference>
<dbReference type="GO" id="GO:0008320">
    <property type="term" value="F:protein transmembrane transporter activity"/>
    <property type="evidence" value="ECO:0007669"/>
    <property type="project" value="UniProtKB-UniRule"/>
</dbReference>
<dbReference type="GO" id="GO:0043953">
    <property type="term" value="P:protein transport by the Tat complex"/>
    <property type="evidence" value="ECO:0007669"/>
    <property type="project" value="UniProtKB-UniRule"/>
</dbReference>
<dbReference type="Gene3D" id="1.20.5.3310">
    <property type="match status" value="1"/>
</dbReference>
<dbReference type="HAMAP" id="MF_00236">
    <property type="entry name" value="TatA_E"/>
    <property type="match status" value="1"/>
</dbReference>
<dbReference type="InterPro" id="IPR003369">
    <property type="entry name" value="TatA/B/E"/>
</dbReference>
<dbReference type="InterPro" id="IPR006312">
    <property type="entry name" value="TatA/E"/>
</dbReference>
<dbReference type="NCBIfam" id="TIGR01411">
    <property type="entry name" value="tatAE"/>
    <property type="match status" value="1"/>
</dbReference>
<dbReference type="PANTHER" id="PTHR42982">
    <property type="entry name" value="SEC-INDEPENDENT PROTEIN TRANSLOCASE PROTEIN TATA"/>
    <property type="match status" value="1"/>
</dbReference>
<dbReference type="PANTHER" id="PTHR42982:SF1">
    <property type="entry name" value="SEC-INDEPENDENT PROTEIN TRANSLOCASE PROTEIN TATA"/>
    <property type="match status" value="1"/>
</dbReference>
<dbReference type="Pfam" id="PF02416">
    <property type="entry name" value="TatA_B_E"/>
    <property type="match status" value="1"/>
</dbReference>
<dbReference type="PRINTS" id="PR01506">
    <property type="entry name" value="TATBPROTEIN"/>
</dbReference>
<organism>
    <name type="scientific">Nitratidesulfovibrio vulgaris (strain DSM 19637 / Miyazaki F)</name>
    <name type="common">Desulfovibrio vulgaris</name>
    <dbReference type="NCBI Taxonomy" id="883"/>
    <lineage>
        <taxon>Bacteria</taxon>
        <taxon>Pseudomonadati</taxon>
        <taxon>Thermodesulfobacteriota</taxon>
        <taxon>Desulfovibrionia</taxon>
        <taxon>Desulfovibrionales</taxon>
        <taxon>Desulfovibrionaceae</taxon>
        <taxon>Nitratidesulfovibrio</taxon>
    </lineage>
</organism>
<keyword id="KW-0997">Cell inner membrane</keyword>
<keyword id="KW-1003">Cell membrane</keyword>
<keyword id="KW-0472">Membrane</keyword>
<keyword id="KW-0653">Protein transport</keyword>
<keyword id="KW-0811">Translocation</keyword>
<keyword id="KW-0812">Transmembrane</keyword>
<keyword id="KW-1133">Transmembrane helix</keyword>
<keyword id="KW-0813">Transport</keyword>
<reference key="1">
    <citation type="submission" date="2008-10" db="EMBL/GenBank/DDBJ databases">
        <title>Complete sequence of Desulfovibrio vulgaris str. 'Miyazaki F'.</title>
        <authorList>
            <person name="Lucas S."/>
            <person name="Copeland A."/>
            <person name="Lapidus A."/>
            <person name="Glavina del Rio T."/>
            <person name="Dalin E."/>
            <person name="Tice H."/>
            <person name="Bruce D."/>
            <person name="Goodwin L."/>
            <person name="Pitluck S."/>
            <person name="Sims D."/>
            <person name="Brettin T."/>
            <person name="Detter J.C."/>
            <person name="Han C."/>
            <person name="Larimer F."/>
            <person name="Land M."/>
            <person name="Hauser L."/>
            <person name="Kyrpides N."/>
            <person name="Mikhailova N."/>
            <person name="Hazen T.C."/>
            <person name="Richardson P."/>
        </authorList>
    </citation>
    <scope>NUCLEOTIDE SEQUENCE [LARGE SCALE GENOMIC DNA]</scope>
    <source>
        <strain>DSM 19637 / Miyazaki F</strain>
    </source>
</reference>
<sequence>MFGIGIQELLVVLVLVLLVFGANKLPEIGGGLGRAIRNFKRATSEPDEIDITPGKKNGKTDKDDKQA</sequence>
<feature type="chain" id="PRO_1000197868" description="Sec-independent protein translocase protein TatA">
    <location>
        <begin position="1"/>
        <end position="67"/>
    </location>
</feature>
<feature type="transmembrane region" description="Helical" evidence="1">
    <location>
        <begin position="1"/>
        <end position="21"/>
    </location>
</feature>
<feature type="region of interest" description="Disordered" evidence="2">
    <location>
        <begin position="46"/>
        <end position="67"/>
    </location>
</feature>
<feature type="compositionally biased region" description="Basic and acidic residues" evidence="2">
    <location>
        <begin position="58"/>
        <end position="67"/>
    </location>
</feature>